<feature type="chain" id="PRO_0000287476" description="Protein mahjong">
    <location>
        <begin position="1"/>
        <end position="1544"/>
    </location>
</feature>
<feature type="domain" description="LisH" evidence="2">
    <location>
        <begin position="912"/>
        <end position="944"/>
    </location>
</feature>
<feature type="region of interest" description="Disordered" evidence="3">
    <location>
        <begin position="1"/>
        <end position="110"/>
    </location>
</feature>
<feature type="region of interest" description="Disordered" evidence="3">
    <location>
        <begin position="946"/>
        <end position="973"/>
    </location>
</feature>
<feature type="region of interest" description="Disordered" evidence="3">
    <location>
        <begin position="987"/>
        <end position="1059"/>
    </location>
</feature>
<feature type="region of interest" description="Disordered" evidence="3">
    <location>
        <begin position="1447"/>
        <end position="1475"/>
    </location>
</feature>
<feature type="region of interest" description="Disordered" evidence="3">
    <location>
        <begin position="1487"/>
        <end position="1544"/>
    </location>
</feature>
<feature type="short sequence motif" description="DWD box 1">
    <location>
        <begin position="1302"/>
        <end position="1309"/>
    </location>
</feature>
<feature type="short sequence motif" description="DWD box 2">
    <location>
        <begin position="1338"/>
        <end position="1345"/>
    </location>
</feature>
<feature type="compositionally biased region" description="Low complexity" evidence="3">
    <location>
        <begin position="10"/>
        <end position="35"/>
    </location>
</feature>
<feature type="compositionally biased region" description="Acidic residues" evidence="3">
    <location>
        <begin position="38"/>
        <end position="91"/>
    </location>
</feature>
<feature type="compositionally biased region" description="Low complexity" evidence="3">
    <location>
        <begin position="961"/>
        <end position="971"/>
    </location>
</feature>
<feature type="compositionally biased region" description="Polar residues" evidence="3">
    <location>
        <begin position="1016"/>
        <end position="1027"/>
    </location>
</feature>
<feature type="compositionally biased region" description="Acidic residues" evidence="3">
    <location>
        <begin position="1451"/>
        <end position="1467"/>
    </location>
</feature>
<feature type="compositionally biased region" description="Acidic residues" evidence="3">
    <location>
        <begin position="1495"/>
        <end position="1535"/>
    </location>
</feature>
<feature type="modified residue" description="Phosphoserine" evidence="4">
    <location>
        <position position="565"/>
    </location>
</feature>
<feature type="modified residue" description="Phosphoserine" evidence="4">
    <location>
        <position position="569"/>
    </location>
</feature>
<feature type="modified residue" description="Phosphoserine" evidence="4">
    <location>
        <position position="955"/>
    </location>
</feature>
<feature type="sequence conflict" description="In Ref. 3; AAO24927." evidence="6" ref="3">
    <original>DM</original>
    <variation>ET</variation>
    <location>
        <begin position="48"/>
        <end position="49"/>
    </location>
</feature>
<feature type="sequence conflict" description="In Ref. 3; AAO24927/AAM48473." evidence="6" ref="3">
    <original>R</original>
    <variation>K</variation>
    <location>
        <position position="1376"/>
    </location>
</feature>
<dbReference type="EMBL" id="AE013599">
    <property type="protein sequence ID" value="AAF46740.2"/>
    <property type="molecule type" value="Genomic_DNA"/>
</dbReference>
<dbReference type="EMBL" id="AY118444">
    <property type="protein sequence ID" value="AAM48473.2"/>
    <property type="molecule type" value="mRNA"/>
</dbReference>
<dbReference type="EMBL" id="BT003172">
    <property type="protein sequence ID" value="AAO24927.1"/>
    <property type="status" value="ALT_FRAME"/>
    <property type="molecule type" value="mRNA"/>
</dbReference>
<dbReference type="EMBL" id="BT016025">
    <property type="protein sequence ID" value="AAV36910.1"/>
    <property type="status" value="ALT_FRAME"/>
    <property type="molecule type" value="mRNA"/>
</dbReference>
<dbReference type="RefSeq" id="NP_001246451.1">
    <property type="nucleotide sequence ID" value="NM_001259522.2"/>
</dbReference>
<dbReference type="RefSeq" id="NP_611592.2">
    <property type="nucleotide sequence ID" value="NM_137748.4"/>
</dbReference>
<dbReference type="SMR" id="Q9W2F2"/>
<dbReference type="BioGRID" id="63088">
    <property type="interactions" value="15"/>
</dbReference>
<dbReference type="FunCoup" id="Q9W2F2">
    <property type="interactions" value="2077"/>
</dbReference>
<dbReference type="IntAct" id="Q9W2F2">
    <property type="interactions" value="3"/>
</dbReference>
<dbReference type="STRING" id="7227.FBpp0293270"/>
<dbReference type="iPTMnet" id="Q9W2F2"/>
<dbReference type="PaxDb" id="7227-FBpp0293270"/>
<dbReference type="EnsemblMetazoa" id="FBtr0071658">
    <property type="protein sequence ID" value="FBpp0071575"/>
    <property type="gene ID" value="FBgn0034641"/>
</dbReference>
<dbReference type="EnsemblMetazoa" id="FBtr0304728">
    <property type="protein sequence ID" value="FBpp0293270"/>
    <property type="gene ID" value="FBgn0034641"/>
</dbReference>
<dbReference type="GeneID" id="37462"/>
<dbReference type="KEGG" id="dme:Dmel_CG10080"/>
<dbReference type="UCSC" id="CG10080-RA">
    <property type="organism name" value="d. melanogaster"/>
</dbReference>
<dbReference type="AGR" id="FB:FBgn0034641"/>
<dbReference type="CTD" id="37462"/>
<dbReference type="FlyBase" id="FBgn0034641">
    <property type="gene designation" value="mahj"/>
</dbReference>
<dbReference type="VEuPathDB" id="VectorBase:FBgn0034641"/>
<dbReference type="eggNOG" id="KOG1832">
    <property type="taxonomic scope" value="Eukaryota"/>
</dbReference>
<dbReference type="GeneTree" id="ENSGT00390000005874"/>
<dbReference type="HOGENOM" id="CLU_001785_1_0_1"/>
<dbReference type="InParanoid" id="Q9W2F2"/>
<dbReference type="OMA" id="ECSQDQA"/>
<dbReference type="OrthoDB" id="27563at2759"/>
<dbReference type="PhylomeDB" id="Q9W2F2"/>
<dbReference type="Reactome" id="R-DME-983168">
    <property type="pathway name" value="Antigen processing: Ubiquitination &amp; Proteasome degradation"/>
</dbReference>
<dbReference type="SignaLink" id="Q9W2F2"/>
<dbReference type="UniPathway" id="UPA00143"/>
<dbReference type="BioGRID-ORCS" id="37462">
    <property type="hits" value="1 hit in 1 CRISPR screen"/>
</dbReference>
<dbReference type="GenomeRNAi" id="37462"/>
<dbReference type="PRO" id="PR:Q9W2F2"/>
<dbReference type="Proteomes" id="UP000000803">
    <property type="component" value="Chromosome 2R"/>
</dbReference>
<dbReference type="Bgee" id="FBgn0034641">
    <property type="expression patterns" value="Expressed in fat body cell in arthropod fat body and 88 other cell types or tissues"/>
</dbReference>
<dbReference type="ExpressionAtlas" id="Q9W2F2">
    <property type="expression patterns" value="baseline and differential"/>
</dbReference>
<dbReference type="GO" id="GO:0080008">
    <property type="term" value="C:Cul4-RING E3 ubiquitin ligase complex"/>
    <property type="evidence" value="ECO:0000318"/>
    <property type="project" value="GO_Central"/>
</dbReference>
<dbReference type="GO" id="GO:0005634">
    <property type="term" value="C:nucleus"/>
    <property type="evidence" value="ECO:0000318"/>
    <property type="project" value="GO_Central"/>
</dbReference>
<dbReference type="GO" id="GO:0035212">
    <property type="term" value="P:cell competition in a multicellular organism"/>
    <property type="evidence" value="ECO:0000315"/>
    <property type="project" value="FlyBase"/>
</dbReference>
<dbReference type="GO" id="GO:0016567">
    <property type="term" value="P:protein ubiquitination"/>
    <property type="evidence" value="ECO:0007669"/>
    <property type="project" value="UniProtKB-UniPathway"/>
</dbReference>
<dbReference type="FunFam" id="2.130.10.10:FF:001589">
    <property type="entry name" value="Mahjong, isoform B"/>
    <property type="match status" value="1"/>
</dbReference>
<dbReference type="Gene3D" id="2.130.10.10">
    <property type="entry name" value="YVTN repeat-like/Quinoprotein amine dehydrogenase"/>
    <property type="match status" value="1"/>
</dbReference>
<dbReference type="InterPro" id="IPR016024">
    <property type="entry name" value="ARM-type_fold"/>
</dbReference>
<dbReference type="InterPro" id="IPR006594">
    <property type="entry name" value="LisH"/>
</dbReference>
<dbReference type="InterPro" id="IPR033270">
    <property type="entry name" value="VPRBP/DCAF1"/>
</dbReference>
<dbReference type="InterPro" id="IPR015943">
    <property type="entry name" value="WD40/YVTN_repeat-like_dom_sf"/>
</dbReference>
<dbReference type="InterPro" id="IPR036322">
    <property type="entry name" value="WD40_repeat_dom_sf"/>
</dbReference>
<dbReference type="PANTHER" id="PTHR13129:SF4">
    <property type="entry name" value="DDB1- AND CUL4-ASSOCIATED FACTOR 1"/>
    <property type="match status" value="1"/>
</dbReference>
<dbReference type="PANTHER" id="PTHR13129">
    <property type="entry name" value="VPRBP PROTEIN-RELATED"/>
    <property type="match status" value="1"/>
</dbReference>
<dbReference type="SMART" id="SM00667">
    <property type="entry name" value="LisH"/>
    <property type="match status" value="1"/>
</dbReference>
<dbReference type="SUPFAM" id="SSF48371">
    <property type="entry name" value="ARM repeat"/>
    <property type="match status" value="1"/>
</dbReference>
<dbReference type="SUPFAM" id="SSF50978">
    <property type="entry name" value="WD40 repeat-like"/>
    <property type="match status" value="1"/>
</dbReference>
<dbReference type="PROSITE" id="PS50896">
    <property type="entry name" value="LISH"/>
    <property type="match status" value="1"/>
</dbReference>
<reference key="1">
    <citation type="journal article" date="2000" name="Science">
        <title>The genome sequence of Drosophila melanogaster.</title>
        <authorList>
            <person name="Adams M.D."/>
            <person name="Celniker S.E."/>
            <person name="Holt R.A."/>
            <person name="Evans C.A."/>
            <person name="Gocayne J.D."/>
            <person name="Amanatides P.G."/>
            <person name="Scherer S.E."/>
            <person name="Li P.W."/>
            <person name="Hoskins R.A."/>
            <person name="Galle R.F."/>
            <person name="George R.A."/>
            <person name="Lewis S.E."/>
            <person name="Richards S."/>
            <person name="Ashburner M."/>
            <person name="Henderson S.N."/>
            <person name="Sutton G.G."/>
            <person name="Wortman J.R."/>
            <person name="Yandell M.D."/>
            <person name="Zhang Q."/>
            <person name="Chen L.X."/>
            <person name="Brandon R.C."/>
            <person name="Rogers Y.-H.C."/>
            <person name="Blazej R.G."/>
            <person name="Champe M."/>
            <person name="Pfeiffer B.D."/>
            <person name="Wan K.H."/>
            <person name="Doyle C."/>
            <person name="Baxter E.G."/>
            <person name="Helt G."/>
            <person name="Nelson C.R."/>
            <person name="Miklos G.L.G."/>
            <person name="Abril J.F."/>
            <person name="Agbayani A."/>
            <person name="An H.-J."/>
            <person name="Andrews-Pfannkoch C."/>
            <person name="Baldwin D."/>
            <person name="Ballew R.M."/>
            <person name="Basu A."/>
            <person name="Baxendale J."/>
            <person name="Bayraktaroglu L."/>
            <person name="Beasley E.M."/>
            <person name="Beeson K.Y."/>
            <person name="Benos P.V."/>
            <person name="Berman B.P."/>
            <person name="Bhandari D."/>
            <person name="Bolshakov S."/>
            <person name="Borkova D."/>
            <person name="Botchan M.R."/>
            <person name="Bouck J."/>
            <person name="Brokstein P."/>
            <person name="Brottier P."/>
            <person name="Burtis K.C."/>
            <person name="Busam D.A."/>
            <person name="Butler H."/>
            <person name="Cadieu E."/>
            <person name="Center A."/>
            <person name="Chandra I."/>
            <person name="Cherry J.M."/>
            <person name="Cawley S."/>
            <person name="Dahlke C."/>
            <person name="Davenport L.B."/>
            <person name="Davies P."/>
            <person name="de Pablos B."/>
            <person name="Delcher A."/>
            <person name="Deng Z."/>
            <person name="Mays A.D."/>
            <person name="Dew I."/>
            <person name="Dietz S.M."/>
            <person name="Dodson K."/>
            <person name="Doup L.E."/>
            <person name="Downes M."/>
            <person name="Dugan-Rocha S."/>
            <person name="Dunkov B.C."/>
            <person name="Dunn P."/>
            <person name="Durbin K.J."/>
            <person name="Evangelista C.C."/>
            <person name="Ferraz C."/>
            <person name="Ferriera S."/>
            <person name="Fleischmann W."/>
            <person name="Fosler C."/>
            <person name="Gabrielian A.E."/>
            <person name="Garg N.S."/>
            <person name="Gelbart W.M."/>
            <person name="Glasser K."/>
            <person name="Glodek A."/>
            <person name="Gong F."/>
            <person name="Gorrell J.H."/>
            <person name="Gu Z."/>
            <person name="Guan P."/>
            <person name="Harris M."/>
            <person name="Harris N.L."/>
            <person name="Harvey D.A."/>
            <person name="Heiman T.J."/>
            <person name="Hernandez J.R."/>
            <person name="Houck J."/>
            <person name="Hostin D."/>
            <person name="Houston K.A."/>
            <person name="Howland T.J."/>
            <person name="Wei M.-H."/>
            <person name="Ibegwam C."/>
            <person name="Jalali M."/>
            <person name="Kalush F."/>
            <person name="Karpen G.H."/>
            <person name="Ke Z."/>
            <person name="Kennison J.A."/>
            <person name="Ketchum K.A."/>
            <person name="Kimmel B.E."/>
            <person name="Kodira C.D."/>
            <person name="Kraft C.L."/>
            <person name="Kravitz S."/>
            <person name="Kulp D."/>
            <person name="Lai Z."/>
            <person name="Lasko P."/>
            <person name="Lei Y."/>
            <person name="Levitsky A.A."/>
            <person name="Li J.H."/>
            <person name="Li Z."/>
            <person name="Liang Y."/>
            <person name="Lin X."/>
            <person name="Liu X."/>
            <person name="Mattei B."/>
            <person name="McIntosh T.C."/>
            <person name="McLeod M.P."/>
            <person name="McPherson D."/>
            <person name="Merkulov G."/>
            <person name="Milshina N.V."/>
            <person name="Mobarry C."/>
            <person name="Morris J."/>
            <person name="Moshrefi A."/>
            <person name="Mount S.M."/>
            <person name="Moy M."/>
            <person name="Murphy B."/>
            <person name="Murphy L."/>
            <person name="Muzny D.M."/>
            <person name="Nelson D.L."/>
            <person name="Nelson D.R."/>
            <person name="Nelson K.A."/>
            <person name="Nixon K."/>
            <person name="Nusskern D.R."/>
            <person name="Pacleb J.M."/>
            <person name="Palazzolo M."/>
            <person name="Pittman G.S."/>
            <person name="Pan S."/>
            <person name="Pollard J."/>
            <person name="Puri V."/>
            <person name="Reese M.G."/>
            <person name="Reinert K."/>
            <person name="Remington K."/>
            <person name="Saunders R.D.C."/>
            <person name="Scheeler F."/>
            <person name="Shen H."/>
            <person name="Shue B.C."/>
            <person name="Siden-Kiamos I."/>
            <person name="Simpson M."/>
            <person name="Skupski M.P."/>
            <person name="Smith T.J."/>
            <person name="Spier E."/>
            <person name="Spradling A.C."/>
            <person name="Stapleton M."/>
            <person name="Strong R."/>
            <person name="Sun E."/>
            <person name="Svirskas R."/>
            <person name="Tector C."/>
            <person name="Turner R."/>
            <person name="Venter E."/>
            <person name="Wang A.H."/>
            <person name="Wang X."/>
            <person name="Wang Z.-Y."/>
            <person name="Wassarman D.A."/>
            <person name="Weinstock G.M."/>
            <person name="Weissenbach J."/>
            <person name="Williams S.M."/>
            <person name="Woodage T."/>
            <person name="Worley K.C."/>
            <person name="Wu D."/>
            <person name="Yang S."/>
            <person name="Yao Q.A."/>
            <person name="Ye J."/>
            <person name="Yeh R.-F."/>
            <person name="Zaveri J.S."/>
            <person name="Zhan M."/>
            <person name="Zhang G."/>
            <person name="Zhao Q."/>
            <person name="Zheng L."/>
            <person name="Zheng X.H."/>
            <person name="Zhong F.N."/>
            <person name="Zhong W."/>
            <person name="Zhou X."/>
            <person name="Zhu S.C."/>
            <person name="Zhu X."/>
            <person name="Smith H.O."/>
            <person name="Gibbs R.A."/>
            <person name="Myers E.W."/>
            <person name="Rubin G.M."/>
            <person name="Venter J.C."/>
        </authorList>
    </citation>
    <scope>NUCLEOTIDE SEQUENCE [LARGE SCALE GENOMIC DNA]</scope>
    <source>
        <strain>Berkeley</strain>
    </source>
</reference>
<reference key="2">
    <citation type="journal article" date="2002" name="Genome Biol.">
        <title>Annotation of the Drosophila melanogaster euchromatic genome: a systematic review.</title>
        <authorList>
            <person name="Misra S."/>
            <person name="Crosby M.A."/>
            <person name="Mungall C.J."/>
            <person name="Matthews B.B."/>
            <person name="Campbell K.S."/>
            <person name="Hradecky P."/>
            <person name="Huang Y."/>
            <person name="Kaminker J.S."/>
            <person name="Millburn G.H."/>
            <person name="Prochnik S.E."/>
            <person name="Smith C.D."/>
            <person name="Tupy J.L."/>
            <person name="Whitfield E.J."/>
            <person name="Bayraktaroglu L."/>
            <person name="Berman B.P."/>
            <person name="Bettencourt B.R."/>
            <person name="Celniker S.E."/>
            <person name="de Grey A.D.N.J."/>
            <person name="Drysdale R.A."/>
            <person name="Harris N.L."/>
            <person name="Richter J."/>
            <person name="Russo S."/>
            <person name="Schroeder A.J."/>
            <person name="Shu S.Q."/>
            <person name="Stapleton M."/>
            <person name="Yamada C."/>
            <person name="Ashburner M."/>
            <person name="Gelbart W.M."/>
            <person name="Rubin G.M."/>
            <person name="Lewis S.E."/>
        </authorList>
    </citation>
    <scope>GENOME REANNOTATION</scope>
    <source>
        <strain>Berkeley</strain>
    </source>
</reference>
<reference key="3">
    <citation type="submission" date="2003-01" db="EMBL/GenBank/DDBJ databases">
        <authorList>
            <person name="Stapleton M."/>
            <person name="Brokstein P."/>
            <person name="Hong L."/>
            <person name="Agbayani A."/>
            <person name="Carlson J.W."/>
            <person name="Champe M."/>
            <person name="Chavez C."/>
            <person name="Dorsett V."/>
            <person name="Dresnek D."/>
            <person name="Farfan D."/>
            <person name="Frise E."/>
            <person name="George R.A."/>
            <person name="Gonzalez M."/>
            <person name="Guarin H."/>
            <person name="Kronmiller B."/>
            <person name="Li P.W."/>
            <person name="Liao G."/>
            <person name="Miranda A."/>
            <person name="Mungall C.J."/>
            <person name="Nunoo J."/>
            <person name="Pacleb J.M."/>
            <person name="Paragas V."/>
            <person name="Park S."/>
            <person name="Patel S."/>
            <person name="Phouanenavong S."/>
            <person name="Wan K.H."/>
            <person name="Yu C."/>
            <person name="Lewis S.E."/>
            <person name="Rubin G.M."/>
            <person name="Celniker S.E."/>
        </authorList>
    </citation>
    <scope>NUCLEOTIDE SEQUENCE [LARGE SCALE MRNA]</scope>
    <source>
        <strain>Berkeley</strain>
        <tissue>Embryo</tissue>
    </source>
</reference>
<reference key="4">
    <citation type="journal article" date="2008" name="J. Proteome Res.">
        <title>Phosphoproteome analysis of Drosophila melanogaster embryos.</title>
        <authorList>
            <person name="Zhai B."/>
            <person name="Villen J."/>
            <person name="Beausoleil S.A."/>
            <person name="Mintseris J."/>
            <person name="Gygi S.P."/>
        </authorList>
    </citation>
    <scope>PHOSPHORYLATION [LARGE SCALE ANALYSIS] AT SER-565; SER-569 AND SER-955</scope>
    <scope>IDENTIFICATION BY MASS SPECTROMETRY</scope>
    <source>
        <tissue>Embryo</tissue>
    </source>
</reference>
<reference key="5">
    <citation type="journal article" date="2010" name="PLoS Biol.">
        <title>Involvement of Lgl and Mahjong/VprBP in cell competition.</title>
        <authorList>
            <person name="Tamori Y."/>
            <person name="Bialucha C.U."/>
            <person name="Tian A.G."/>
            <person name="Kajita M."/>
            <person name="Huang Y.C."/>
            <person name="Norman M."/>
            <person name="Harrison N."/>
            <person name="Poulton J."/>
            <person name="Ivanovitch K."/>
            <person name="Disch L."/>
            <person name="Liu T."/>
            <person name="Deng W.M."/>
            <person name="Fujita Y."/>
        </authorList>
    </citation>
    <scope>FUNCTION</scope>
    <scope>DISRUPTION PHENOTYPE</scope>
    <scope>INTERACTION WITH L(2)GL</scope>
</reference>
<evidence type="ECO:0000250" key="1"/>
<evidence type="ECO:0000255" key="2">
    <source>
        <dbReference type="PROSITE-ProRule" id="PRU00126"/>
    </source>
</evidence>
<evidence type="ECO:0000256" key="3">
    <source>
        <dbReference type="SAM" id="MobiDB-lite"/>
    </source>
</evidence>
<evidence type="ECO:0000269" key="4">
    <source>
    </source>
</evidence>
<evidence type="ECO:0000269" key="5">
    <source>
    </source>
</evidence>
<evidence type="ECO:0000305" key="6"/>
<keyword id="KW-0539">Nucleus</keyword>
<keyword id="KW-0597">Phosphoprotein</keyword>
<keyword id="KW-1185">Reference proteome</keyword>
<keyword id="KW-0833">Ubl conjugation pathway</keyword>
<gene>
    <name type="primary">mahj</name>
    <name type="ORF">CG10080</name>
</gene>
<name>DCAF1_DROME</name>
<protein>
    <recommendedName>
        <fullName>Protein mahjong</fullName>
    </recommendedName>
    <alternativeName>
        <fullName>DDB1- and CUL4-associated factor-like 1</fullName>
    </alternativeName>
    <alternativeName>
        <fullName>VPRBP-like protein</fullName>
    </alternativeName>
</protein>
<organism>
    <name type="scientific">Drosophila melanogaster</name>
    <name type="common">Fruit fly</name>
    <dbReference type="NCBI Taxonomy" id="7227"/>
    <lineage>
        <taxon>Eukaryota</taxon>
        <taxon>Metazoa</taxon>
        <taxon>Ecdysozoa</taxon>
        <taxon>Arthropoda</taxon>
        <taxon>Hexapoda</taxon>
        <taxon>Insecta</taxon>
        <taxon>Pterygota</taxon>
        <taxon>Neoptera</taxon>
        <taxon>Endopterygota</taxon>
        <taxon>Diptera</taxon>
        <taxon>Brachycera</taxon>
        <taxon>Muscomorpha</taxon>
        <taxon>Ephydroidea</taxon>
        <taxon>Drosophilidae</taxon>
        <taxon>Drosophila</taxon>
        <taxon>Sophophora</taxon>
    </lineage>
</organism>
<comment type="function">
    <text evidence="1 5">Probable substrate recognition component of tsome E3 ubiquitin-protein ligase complex (By similarity). Plays a key role in cell competition via its interaction with l(2)gl.</text>
</comment>
<comment type="pathway">
    <text>Protein modification; protein ubiquitination.</text>
</comment>
<comment type="subunit">
    <text evidence="1 5">Component of the CUL4-RBX1-DDB1-DCAF1 E3 ubiquitin-protein ligase complex (By similarity). Interacts with l(2)gl.</text>
</comment>
<comment type="subcellular location">
    <subcellularLocation>
        <location evidence="1">Nucleus</location>
    </subcellularLocation>
</comment>
<comment type="domain">
    <text evidence="1">The DWD boxes are required for interaction with DDB1.</text>
</comment>
<comment type="disruption phenotype">
    <text evidence="5">Homozygous mutants develop more slowly and die at a late pupal stage. Zygotic mutants do not have obvious patterning defects during embryonic or larval development but cells undergo apoptosis when surrounded by wild-type cells in the wing disk epithelium.</text>
</comment>
<comment type="similarity">
    <text evidence="6">Belongs to the VPRBP/DCAF1 family.</text>
</comment>
<comment type="sequence caution" evidence="6">
    <conflict type="frameshift">
        <sequence resource="EMBL-CDS" id="AAO24927"/>
    </conflict>
</comment>
<comment type="sequence caution" evidence="6">
    <conflict type="frameshift">
        <sequence resource="EMBL-CDS" id="AAV36910"/>
    </conflict>
</comment>
<accession>Q9W2F2</accession>
<accession>Q5U167</accession>
<accession>Q86PE6</accession>
<accession>Q8MT13</accession>
<sequence length="1544" mass="172085">MSEGSGSENAAAAEAAAEAEAATEAALMAEAVAVAYQSDEEEQPEAEDMPEQAGDNQEEDAAEQQDGGEPEADEDADADDAMSVENAENESDSGGNAEETAAADRRQATKKELTQIIDKWEQQQTQNGYDPVPTLRSLAEIFEREKDVYRRKDPDPLDSRHPYRADPSCQYGLLLKLLFRKDTFMGKLLNDYLRENYFSRQNVSRSSLELNILACRLILEIMPGMETSAVFQTAEGDGTINRIYSWAEDSIEPLQSYATGLLAEAMEVSDIAINFRDLNIRLVPKMIKRLHMLLAISKSATSDVNTSMHNLSADSSTAGMLSWVACASNASAPQSPQHNGSGLGASSSQHGDASNMSILFENSRDAFSVSRYYKRMYIPLHPATADTSQMLIMRFLTSLGEYQEFLAMAFENNVMQLIFGYLENLDRRDTCLAYEVLKYLASLLCHKKFALEFISHGGLELLLKVPRPSLATTGVSIAIYYLAYCEDAMERICSMQRPLISELVRYALWILGRCHDSSKCHATMFFSLSFQFKVILDEFDAQDGLRKLYNVISVLKILDPSHNDSDNDSDFNEDVECASRQMVRHVCVALKRYMEAHFFYKYNSFLCQTNAASPAPSSAHYFNQNPTVAAKLTFDQLNDQIRTLQEHTSIRAHWQPVDQLMKLGGITMLLRIIAFSYDWVNSGRSETVRSALDVLSVCCIIPRVYVVLCERLLMLDKTTTSGFCSVLGAAAGEISSDAEVIKSALAVLCHCVCSPIIRKDSGTSLIKFGTSSRKNKANHKYAEELIERVWESVCSNNGIVVLLSLMQTKGPITDADCIRGMACRALAGLARSDRVRQIVSKLPLFASGQLQTLMRDPILQEKRAEHVIFQKYALELLERVSGKTKPLNNPLDPSLSNMHKANVIAQTRIQYNKQQLYQLIFEHLESNGLSQTAQMLQREVGLPLQTPTTRSFHQSPFDYKSLPSGSSSLSRNRLRSRMQDVNAAIMGNGDLNRSFGEDSSPAGAGGSNAGDGVSIPNFSSLNTTQTPIKIRRTDRSSVSRSIQKQAMEPGGMSVGLAEDGQLHPKRITLNTIVTEYLTNQHSLCNNPVTTCPQFDLYEPHKCPDPKPSRLLSSNYNLTSRHARTQAGFNTSRFDRRYVHTHFSPWRSIRSADYEDLEFTCCDLAGKYIIVGTQQGDGRVFNMNDGVEQFFSNCHNFSVDAIKANRAGDLVITSSFWRTPTSILWSIADDEFKLKLRLPDVTYCEFSQTVQDRLLGTQNECATLFDINTGSKVASFTPTIPNLYTKNRATLCRTDELILSDGVLWDVRSGKEIHKFDKFNQCISGVFHPNCLEIIANTEVWDLRTFHLLQTVPVLDQRNCTFSPMHVIYGASLGADRDHDMETTTYDTSFNVLDAYDYSSIATIDVKRNINDLSVSANGSLIAVVEDYSGYESKQETYVKIYAVGVKKSERSEEEDDEEVPESDEDGSDTGSENTFAIGQNLLGFPLLRNLHGSDNDDEDLDEDDDDGEPLDSDDDSDDDDGSDNGDDDGDFDVLEYFDRSSSDD</sequence>
<proteinExistence type="evidence at protein level"/>